<feature type="chain" id="PRO_0000452313" description="Cholesterol ring-cleaving hydrolase IpdA subunit">
    <location>
        <begin position="1"/>
        <end position="296"/>
    </location>
</feature>
<feature type="mutagenesis site" description="Loss of activity." evidence="2">
    <original>E</original>
    <variation>A</variation>
    <variation>D</variation>
    <location>
        <position position="105"/>
    </location>
</feature>
<feature type="helix" evidence="10">
    <location>
        <begin position="11"/>
        <end position="16"/>
    </location>
</feature>
<feature type="strand" evidence="10">
    <location>
        <begin position="23"/>
        <end position="26"/>
    </location>
</feature>
<feature type="helix" evidence="10">
    <location>
        <begin position="36"/>
        <end position="44"/>
    </location>
</feature>
<feature type="strand" evidence="10">
    <location>
        <begin position="49"/>
        <end position="57"/>
    </location>
</feature>
<feature type="helix" evidence="10">
    <location>
        <begin position="58"/>
        <end position="65"/>
    </location>
</feature>
<feature type="strand" evidence="10">
    <location>
        <begin position="69"/>
        <end position="77"/>
    </location>
</feature>
<feature type="helix" evidence="10">
    <location>
        <begin position="87"/>
        <end position="94"/>
    </location>
</feature>
<feature type="strand" evidence="10">
    <location>
        <begin position="98"/>
        <end position="102"/>
    </location>
</feature>
<feature type="helix" evidence="10">
    <location>
        <begin position="105"/>
        <end position="116"/>
    </location>
</feature>
<feature type="strand" evidence="10">
    <location>
        <begin position="120"/>
        <end position="125"/>
    </location>
</feature>
<feature type="turn" evidence="10">
    <location>
        <begin position="126"/>
        <end position="129"/>
    </location>
</feature>
<feature type="helix" evidence="10">
    <location>
        <begin position="132"/>
        <end position="136"/>
    </location>
</feature>
<feature type="helix" evidence="10">
    <location>
        <begin position="137"/>
        <end position="139"/>
    </location>
</feature>
<feature type="strand" evidence="10">
    <location>
        <begin position="140"/>
        <end position="144"/>
    </location>
</feature>
<feature type="strand" evidence="10">
    <location>
        <begin position="156"/>
        <end position="161"/>
    </location>
</feature>
<feature type="strand" evidence="10">
    <location>
        <begin position="165"/>
        <end position="175"/>
    </location>
</feature>
<feature type="helix" evidence="10">
    <location>
        <begin position="191"/>
        <end position="196"/>
    </location>
</feature>
<feature type="strand" evidence="10">
    <location>
        <begin position="198"/>
        <end position="206"/>
    </location>
</feature>
<feature type="helix" evidence="10">
    <location>
        <begin position="211"/>
        <end position="217"/>
    </location>
</feature>
<feature type="helix" evidence="10">
    <location>
        <begin position="220"/>
        <end position="222"/>
    </location>
</feature>
<feature type="strand" evidence="10">
    <location>
        <begin position="223"/>
        <end position="225"/>
    </location>
</feature>
<feature type="helix" evidence="10">
    <location>
        <begin position="227"/>
        <end position="229"/>
    </location>
</feature>
<feature type="strand" evidence="10">
    <location>
        <begin position="231"/>
        <end position="235"/>
    </location>
</feature>
<feature type="turn" evidence="10">
    <location>
        <begin position="237"/>
        <end position="242"/>
    </location>
</feature>
<feature type="helix" evidence="10">
    <location>
        <begin position="253"/>
        <end position="262"/>
    </location>
</feature>
<feature type="helix" evidence="10">
    <location>
        <begin position="266"/>
        <end position="276"/>
    </location>
</feature>
<feature type="strand" evidence="10">
    <location>
        <begin position="277"/>
        <end position="279"/>
    </location>
</feature>
<feature type="helix" evidence="10">
    <location>
        <begin position="281"/>
        <end position="294"/>
    </location>
</feature>
<protein>
    <recommendedName>
        <fullName evidence="4">Cholesterol ring-cleaving hydrolase IpdA subunit</fullName>
        <ecNumber evidence="2">4.1.99.-</ecNumber>
    </recommendedName>
    <alternativeName>
        <fullName evidence="4">(3E)-2-(2-carboxylatoethyl)-3-methyl-6-oxocyclohex-1-ene-1-carboxyl-CoA hydrolase alpha subunit</fullName>
        <shortName evidence="4">COCHEA-CoA hydrolase alpha subunit</shortName>
    </alternativeName>
</protein>
<proteinExistence type="evidence at protein level"/>
<keyword id="KW-0002">3D-structure</keyword>
<keyword id="KW-0153">Cholesterol metabolism</keyword>
<keyword id="KW-0443">Lipid metabolism</keyword>
<keyword id="KW-0456">Lyase</keyword>
<keyword id="KW-0753">Steroid metabolism</keyword>
<keyword id="KW-1207">Sterol metabolism</keyword>
<sequence>MVSKRDKRISLDDAVGELRSGMTIGIGGWGSRRKPMALVRALLRSDVTDLTVVTYGGPDLGLLCSAGKVTKAYYGFVSLDSAPFYDPWFAKARTAGEIAVREMDEGMVKCGLEAAAARLPFLPIRAGLGSDVRRFWGDELRTVTSPYPDASGKSETLIAMPALNLDAALVHLNLGDKHGNAAYTGVDPYFDDLYCAAAEKRFVSVERVVETEELVKTVPLQNLILNRMMVDGVVEAPNGAHFTLAGDSYGRDEKFQRHYAESAKTPQAWQQFVATYLSGSEDDYQAAVKKFAEEQA</sequence>
<reference key="1">
    <citation type="journal article" date="2006" name="Proc. Natl. Acad. Sci. U.S.A.">
        <title>The complete genome of Rhodococcus sp. RHA1 provides insights into a catabolic powerhouse.</title>
        <authorList>
            <person name="McLeod M.P."/>
            <person name="Warren R.L."/>
            <person name="Hsiao W.W.L."/>
            <person name="Araki N."/>
            <person name="Myhre M."/>
            <person name="Fernandes C."/>
            <person name="Miyazawa D."/>
            <person name="Wong W."/>
            <person name="Lillquist A.L."/>
            <person name="Wang D."/>
            <person name="Dosanjh M."/>
            <person name="Hara H."/>
            <person name="Petrescu A."/>
            <person name="Morin R.D."/>
            <person name="Yang G."/>
            <person name="Stott J.M."/>
            <person name="Schein J.E."/>
            <person name="Shin H."/>
            <person name="Smailus D."/>
            <person name="Siddiqui A.S."/>
            <person name="Marra M.A."/>
            <person name="Jones S.J.M."/>
            <person name="Holt R."/>
            <person name="Brinkman F.S.L."/>
            <person name="Miyauchi K."/>
            <person name="Fukuda M."/>
            <person name="Davies J.E."/>
            <person name="Mohn W.W."/>
            <person name="Eltis L.D."/>
        </authorList>
    </citation>
    <scope>NUCLEOTIDE SEQUENCE [LARGE SCALE GENOMIC DNA]</scope>
    <source>
        <strain>RHA1</strain>
    </source>
</reference>
<reference key="2">
    <citation type="journal article" date="2017" name="MBio">
        <title>Catabolism of the last two steroid rings in Mycobacterium tuberculosis and other bacteria.</title>
        <authorList>
            <person name="Crowe A.M."/>
            <person name="Casabon I."/>
            <person name="Brown K.L."/>
            <person name="Liu J."/>
            <person name="Lian J."/>
            <person name="Rogalski J.C."/>
            <person name="Hurst T.E."/>
            <person name="Snieckus V."/>
            <person name="Foster L.J."/>
            <person name="Eltis L.D."/>
        </authorList>
    </citation>
    <scope>FUNCTION</scope>
    <scope>PATHWAY</scope>
    <scope>DISRUPTION PHENOTYPE</scope>
    <source>
        <strain>RHA1</strain>
    </source>
</reference>
<reference evidence="7 8 9" key="3">
    <citation type="journal article" date="2018" name="Proc. Natl. Acad. Sci. U.S.A.">
        <title>IpdAB, a virulence factor in Mycobacterium tuberculosis, is a cholesterol ring-cleaving hydrolase.</title>
        <authorList>
            <person name="Crowe A.M."/>
            <person name="Workman S.D."/>
            <person name="Watanabe N."/>
            <person name="Worrall L.J."/>
            <person name="Strynadka N.C.J."/>
            <person name="Eltis L.D."/>
        </authorList>
    </citation>
    <scope>X-RAY CRYSTALLOGRAPHY (1.40 ANGSTROMS) OF 2-296 IN COMPLEXES WITH IPDB AND COCHEA-COA AND OF MUTANT ALA-105 IN COMPLEX WITH IPDB AND COCHEA-COA</scope>
    <scope>FUNCTION</scope>
    <scope>CATALYTIC ACTIVITY</scope>
    <scope>BIOPHYSICOCHEMICAL PROPERTIES</scope>
    <scope>SUBUNIT</scope>
    <scope>MUTAGENESIS OF GLU-105</scope>
</reference>
<organism>
    <name type="scientific">Rhodococcus jostii (strain RHA1)</name>
    <dbReference type="NCBI Taxonomy" id="101510"/>
    <lineage>
        <taxon>Bacteria</taxon>
        <taxon>Bacillati</taxon>
        <taxon>Actinomycetota</taxon>
        <taxon>Actinomycetes</taxon>
        <taxon>Mycobacteriales</taxon>
        <taxon>Nocardiaceae</taxon>
        <taxon>Rhodococcus</taxon>
    </lineage>
</organism>
<name>IPDA_RHOJR</name>
<evidence type="ECO:0000269" key="1">
    <source>
    </source>
</evidence>
<evidence type="ECO:0000269" key="2">
    <source>
    </source>
</evidence>
<evidence type="ECO:0000303" key="3">
    <source>
    </source>
</evidence>
<evidence type="ECO:0000305" key="4"/>
<evidence type="ECO:0000305" key="5">
    <source>
    </source>
</evidence>
<evidence type="ECO:0000312" key="6">
    <source>
        <dbReference type="EMBL" id="ABG96437.1"/>
    </source>
</evidence>
<evidence type="ECO:0007744" key="7">
    <source>
        <dbReference type="PDB" id="6CO6"/>
    </source>
</evidence>
<evidence type="ECO:0007744" key="8">
    <source>
        <dbReference type="PDB" id="6CO9"/>
    </source>
</evidence>
<evidence type="ECO:0007744" key="9">
    <source>
        <dbReference type="PDB" id="6COJ"/>
    </source>
</evidence>
<evidence type="ECO:0007829" key="10">
    <source>
        <dbReference type="PDB" id="6COJ"/>
    </source>
</evidence>
<accession>Q0S7P9</accession>
<comment type="function">
    <text evidence="1 2 5">Involved in the final steps of cholesterol and steroid degradation (PubMed:28377529, PubMed:29581275). Opens the last steroid ring of cholesterol by catalyzing the hydrolysis of (3E)-2-(2-carboxylatoethyl)-3-methyl-6-oxocyclohex-1-ene-1-carboxyl-CoA (COCHEA-CoA) to 6-methyl-3,7-dioxodecanedioyl-CoA (MeDODA-CoA) (Probable) (PubMed:29581275).</text>
</comment>
<comment type="catalytic activity">
    <reaction evidence="2">
        <text>(3E)-2-(2-carboxylatoethyl)-3-methyl-6-oxocyclohex-1-ene-1-carboxyl-CoA + H2O = 6-methyl-3,7-dioxodecanedioyl-CoA</text>
        <dbReference type="Rhea" id="RHEA:66364"/>
        <dbReference type="ChEBI" id="CHEBI:15377"/>
        <dbReference type="ChEBI" id="CHEBI:167101"/>
        <dbReference type="ChEBI" id="CHEBI:167102"/>
    </reaction>
    <physiologicalReaction direction="left-to-right" evidence="2">
        <dbReference type="Rhea" id="RHEA:66365"/>
    </physiologicalReaction>
</comment>
<comment type="biophysicochemical properties">
    <kinetics>
        <KM evidence="2">120 uM for COCHEA-CoA</KM>
        <text evidence="2">kcat is 5.8 sec(-1) with COCHEA-CoA as substrate.</text>
    </kinetics>
</comment>
<comment type="pathway">
    <text evidence="1">Steroid metabolism; cholesterol degradation.</text>
</comment>
<comment type="subunit">
    <text evidence="2">Heterotetramer composed of 2 IpdA subunits and 2 IpdB subunits.</text>
</comment>
<comment type="disruption phenotype">
    <text evidence="1">IpdAB double deletion mutant does not grow on cholesterol or HIP, but grows as the wild-type on pyruvate. In the presence of cholesterol, ipdAB double deletion mutant accumulates COCHEA-CoA.</text>
</comment>
<comment type="similarity">
    <text evidence="4">Belongs to the 3-oxoacid CoA-transferase subunit A family.</text>
</comment>
<gene>
    <name evidence="3" type="primary">ipdA</name>
    <name evidence="6" type="ordered locus">RHA1_ro04651</name>
</gene>
<dbReference type="EC" id="4.1.99.-" evidence="2"/>
<dbReference type="EMBL" id="CP000431">
    <property type="protein sequence ID" value="ABG96437.1"/>
    <property type="molecule type" value="Genomic_DNA"/>
</dbReference>
<dbReference type="RefSeq" id="WP_011597005.1">
    <property type="nucleotide sequence ID" value="NC_008268.1"/>
</dbReference>
<dbReference type="PDB" id="6CO6">
    <property type="method" value="X-ray"/>
    <property type="resolution" value="1.70 A"/>
    <property type="chains" value="A=2-296"/>
</dbReference>
<dbReference type="PDB" id="6CO9">
    <property type="method" value="X-ray"/>
    <property type="resolution" value="1.60 A"/>
    <property type="chains" value="A=2-296"/>
</dbReference>
<dbReference type="PDB" id="6COJ">
    <property type="method" value="X-ray"/>
    <property type="resolution" value="1.40 A"/>
    <property type="chains" value="A=2-296"/>
</dbReference>
<dbReference type="PDBsum" id="6CO6"/>
<dbReference type="PDBsum" id="6CO9"/>
<dbReference type="PDBsum" id="6COJ"/>
<dbReference type="SMR" id="Q0S7P9"/>
<dbReference type="KEGG" id="rha:RHA1_ro04651"/>
<dbReference type="PATRIC" id="fig|101510.16.peg.4694"/>
<dbReference type="eggNOG" id="COG1788">
    <property type="taxonomic scope" value="Bacteria"/>
</dbReference>
<dbReference type="HOGENOM" id="CLU_049557_1_0_11"/>
<dbReference type="OrthoDB" id="3742129at2"/>
<dbReference type="SABIO-RK" id="Q0S7P9"/>
<dbReference type="UniPathway" id="UPA01058"/>
<dbReference type="Proteomes" id="UP000008710">
    <property type="component" value="Chromosome"/>
</dbReference>
<dbReference type="GO" id="GO:0008410">
    <property type="term" value="F:CoA-transferase activity"/>
    <property type="evidence" value="ECO:0007669"/>
    <property type="project" value="InterPro"/>
</dbReference>
<dbReference type="GO" id="GO:0016829">
    <property type="term" value="F:lyase activity"/>
    <property type="evidence" value="ECO:0007669"/>
    <property type="project" value="UniProtKB-KW"/>
</dbReference>
<dbReference type="GO" id="GO:0006707">
    <property type="term" value="P:cholesterol catabolic process"/>
    <property type="evidence" value="ECO:0007669"/>
    <property type="project" value="UniProtKB-UniPathway"/>
</dbReference>
<dbReference type="Gene3D" id="3.30.30.40">
    <property type="match status" value="1"/>
</dbReference>
<dbReference type="Gene3D" id="3.40.1080.10">
    <property type="entry name" value="Glutaconate Coenzyme A-transferase"/>
    <property type="match status" value="1"/>
</dbReference>
<dbReference type="InterPro" id="IPR004165">
    <property type="entry name" value="CoA_trans_fam_I"/>
</dbReference>
<dbReference type="InterPro" id="IPR037171">
    <property type="entry name" value="NagB/RpiA_transferase-like"/>
</dbReference>
<dbReference type="PANTHER" id="PTHR13707">
    <property type="entry name" value="KETOACID-COENZYME A TRANSFERASE"/>
    <property type="match status" value="1"/>
</dbReference>
<dbReference type="PANTHER" id="PTHR13707:SF57">
    <property type="entry name" value="SUCCINYL-COA:3-KETOACID COENZYME A TRANSFERASE SUBUNIT B-RELATED"/>
    <property type="match status" value="1"/>
</dbReference>
<dbReference type="Pfam" id="PF01144">
    <property type="entry name" value="CoA_trans"/>
    <property type="match status" value="1"/>
</dbReference>
<dbReference type="SMART" id="SM00882">
    <property type="entry name" value="CoA_trans"/>
    <property type="match status" value="1"/>
</dbReference>
<dbReference type="SUPFAM" id="SSF100950">
    <property type="entry name" value="NagB/RpiA/CoA transferase-like"/>
    <property type="match status" value="1"/>
</dbReference>